<organism>
    <name type="scientific">Dichelobacter nodosus (strain VCS1703A)</name>
    <dbReference type="NCBI Taxonomy" id="246195"/>
    <lineage>
        <taxon>Bacteria</taxon>
        <taxon>Pseudomonadati</taxon>
        <taxon>Pseudomonadota</taxon>
        <taxon>Gammaproteobacteria</taxon>
        <taxon>Cardiobacteriales</taxon>
        <taxon>Cardiobacteriaceae</taxon>
        <taxon>Dichelobacter</taxon>
    </lineage>
</organism>
<accession>A5EWG6</accession>
<reference key="1">
    <citation type="journal article" date="2007" name="Nat. Biotechnol.">
        <title>Genome sequence and identification of candidate vaccine antigens from the animal pathogen Dichelobacter nodosus.</title>
        <authorList>
            <person name="Myers G.S.A."/>
            <person name="Parker D."/>
            <person name="Al-Hasani K."/>
            <person name="Kennan R.M."/>
            <person name="Seemann T."/>
            <person name="Ren Q."/>
            <person name="Badger J.H."/>
            <person name="Selengut J.D."/>
            <person name="Deboy R.T."/>
            <person name="Tettelin H."/>
            <person name="Boyce J.D."/>
            <person name="McCarl V.P."/>
            <person name="Han X."/>
            <person name="Nelson W.C."/>
            <person name="Madupu R."/>
            <person name="Mohamoud Y."/>
            <person name="Holley T."/>
            <person name="Fedorova N."/>
            <person name="Khouri H."/>
            <person name="Bottomley S.P."/>
            <person name="Whittington R.J."/>
            <person name="Adler B."/>
            <person name="Songer J.G."/>
            <person name="Rood J.I."/>
            <person name="Paulsen I.T."/>
        </authorList>
    </citation>
    <scope>NUCLEOTIDE SEQUENCE [LARGE SCALE GENOMIC DNA]</scope>
    <source>
        <strain>VCS1703A</strain>
    </source>
</reference>
<proteinExistence type="inferred from homology"/>
<keyword id="KW-0030">Aminoacyl-tRNA synthetase</keyword>
<keyword id="KW-0067">ATP-binding</keyword>
<keyword id="KW-0963">Cytoplasm</keyword>
<keyword id="KW-0436">Ligase</keyword>
<keyword id="KW-0479">Metal-binding</keyword>
<keyword id="KW-0547">Nucleotide-binding</keyword>
<keyword id="KW-0648">Protein biosynthesis</keyword>
<keyword id="KW-1185">Reference proteome</keyword>
<keyword id="KW-0862">Zinc</keyword>
<dbReference type="EC" id="6.1.1.16" evidence="1"/>
<dbReference type="EMBL" id="CP000513">
    <property type="protein sequence ID" value="ABQ13179.1"/>
    <property type="molecule type" value="Genomic_DNA"/>
</dbReference>
<dbReference type="RefSeq" id="WP_011927955.1">
    <property type="nucleotide sequence ID" value="NC_009446.1"/>
</dbReference>
<dbReference type="SMR" id="A5EWG6"/>
<dbReference type="STRING" id="246195.DNO_0208"/>
<dbReference type="KEGG" id="dno:DNO_0208"/>
<dbReference type="eggNOG" id="COG0215">
    <property type="taxonomic scope" value="Bacteria"/>
</dbReference>
<dbReference type="HOGENOM" id="CLU_013528_0_1_6"/>
<dbReference type="OrthoDB" id="9815130at2"/>
<dbReference type="Proteomes" id="UP000000248">
    <property type="component" value="Chromosome"/>
</dbReference>
<dbReference type="GO" id="GO:0005829">
    <property type="term" value="C:cytosol"/>
    <property type="evidence" value="ECO:0007669"/>
    <property type="project" value="TreeGrafter"/>
</dbReference>
<dbReference type="GO" id="GO:0005524">
    <property type="term" value="F:ATP binding"/>
    <property type="evidence" value="ECO:0007669"/>
    <property type="project" value="UniProtKB-UniRule"/>
</dbReference>
<dbReference type="GO" id="GO:0004817">
    <property type="term" value="F:cysteine-tRNA ligase activity"/>
    <property type="evidence" value="ECO:0007669"/>
    <property type="project" value="UniProtKB-UniRule"/>
</dbReference>
<dbReference type="GO" id="GO:0008270">
    <property type="term" value="F:zinc ion binding"/>
    <property type="evidence" value="ECO:0007669"/>
    <property type="project" value="UniProtKB-UniRule"/>
</dbReference>
<dbReference type="GO" id="GO:0006423">
    <property type="term" value="P:cysteinyl-tRNA aminoacylation"/>
    <property type="evidence" value="ECO:0007669"/>
    <property type="project" value="UniProtKB-UniRule"/>
</dbReference>
<dbReference type="CDD" id="cd07963">
    <property type="entry name" value="Anticodon_Ia_Cys"/>
    <property type="match status" value="1"/>
</dbReference>
<dbReference type="CDD" id="cd00672">
    <property type="entry name" value="CysRS_core"/>
    <property type="match status" value="1"/>
</dbReference>
<dbReference type="FunFam" id="3.40.50.620:FF:000009">
    <property type="entry name" value="Cysteine--tRNA ligase"/>
    <property type="match status" value="1"/>
</dbReference>
<dbReference type="Gene3D" id="1.20.120.1910">
    <property type="entry name" value="Cysteine-tRNA ligase, C-terminal anti-codon recognition domain"/>
    <property type="match status" value="1"/>
</dbReference>
<dbReference type="Gene3D" id="3.40.50.620">
    <property type="entry name" value="HUPs"/>
    <property type="match status" value="1"/>
</dbReference>
<dbReference type="HAMAP" id="MF_00041">
    <property type="entry name" value="Cys_tRNA_synth"/>
    <property type="match status" value="1"/>
</dbReference>
<dbReference type="InterPro" id="IPR015803">
    <property type="entry name" value="Cys-tRNA-ligase"/>
</dbReference>
<dbReference type="InterPro" id="IPR015273">
    <property type="entry name" value="Cys-tRNA-synt_Ia_DALR"/>
</dbReference>
<dbReference type="InterPro" id="IPR024909">
    <property type="entry name" value="Cys-tRNA/MSH_ligase"/>
</dbReference>
<dbReference type="InterPro" id="IPR056411">
    <property type="entry name" value="CysS_C"/>
</dbReference>
<dbReference type="InterPro" id="IPR014729">
    <property type="entry name" value="Rossmann-like_a/b/a_fold"/>
</dbReference>
<dbReference type="InterPro" id="IPR032678">
    <property type="entry name" value="tRNA-synt_1_cat_dom"/>
</dbReference>
<dbReference type="InterPro" id="IPR009080">
    <property type="entry name" value="tRNAsynth_Ia_anticodon-bd"/>
</dbReference>
<dbReference type="NCBIfam" id="TIGR00435">
    <property type="entry name" value="cysS"/>
    <property type="match status" value="1"/>
</dbReference>
<dbReference type="PANTHER" id="PTHR10890:SF3">
    <property type="entry name" value="CYSTEINE--TRNA LIGASE, CYTOPLASMIC"/>
    <property type="match status" value="1"/>
</dbReference>
<dbReference type="PANTHER" id="PTHR10890">
    <property type="entry name" value="CYSTEINYL-TRNA SYNTHETASE"/>
    <property type="match status" value="1"/>
</dbReference>
<dbReference type="Pfam" id="PF23493">
    <property type="entry name" value="CysS_C"/>
    <property type="match status" value="1"/>
</dbReference>
<dbReference type="Pfam" id="PF09190">
    <property type="entry name" value="DALR_2"/>
    <property type="match status" value="1"/>
</dbReference>
<dbReference type="Pfam" id="PF01406">
    <property type="entry name" value="tRNA-synt_1e"/>
    <property type="match status" value="1"/>
</dbReference>
<dbReference type="PRINTS" id="PR00983">
    <property type="entry name" value="TRNASYNTHCYS"/>
</dbReference>
<dbReference type="SMART" id="SM00840">
    <property type="entry name" value="DALR_2"/>
    <property type="match status" value="1"/>
</dbReference>
<dbReference type="SUPFAM" id="SSF47323">
    <property type="entry name" value="Anticodon-binding domain of a subclass of class I aminoacyl-tRNA synthetases"/>
    <property type="match status" value="1"/>
</dbReference>
<dbReference type="SUPFAM" id="SSF52374">
    <property type="entry name" value="Nucleotidylyl transferase"/>
    <property type="match status" value="1"/>
</dbReference>
<name>SYC_DICNV</name>
<evidence type="ECO:0000255" key="1">
    <source>
        <dbReference type="HAMAP-Rule" id="MF_00041"/>
    </source>
</evidence>
<comment type="catalytic activity">
    <reaction evidence="1">
        <text>tRNA(Cys) + L-cysteine + ATP = L-cysteinyl-tRNA(Cys) + AMP + diphosphate</text>
        <dbReference type="Rhea" id="RHEA:17773"/>
        <dbReference type="Rhea" id="RHEA-COMP:9661"/>
        <dbReference type="Rhea" id="RHEA-COMP:9679"/>
        <dbReference type="ChEBI" id="CHEBI:30616"/>
        <dbReference type="ChEBI" id="CHEBI:33019"/>
        <dbReference type="ChEBI" id="CHEBI:35235"/>
        <dbReference type="ChEBI" id="CHEBI:78442"/>
        <dbReference type="ChEBI" id="CHEBI:78517"/>
        <dbReference type="ChEBI" id="CHEBI:456215"/>
        <dbReference type="EC" id="6.1.1.16"/>
    </reaction>
</comment>
<comment type="cofactor">
    <cofactor evidence="1">
        <name>Zn(2+)</name>
        <dbReference type="ChEBI" id="CHEBI:29105"/>
    </cofactor>
    <text evidence="1">Binds 1 zinc ion per subunit.</text>
</comment>
<comment type="subunit">
    <text evidence="1">Monomer.</text>
</comment>
<comment type="subcellular location">
    <subcellularLocation>
        <location evidence="1">Cytoplasm</location>
    </subcellularLocation>
</comment>
<comment type="similarity">
    <text evidence="1">Belongs to the class-I aminoacyl-tRNA synthetase family.</text>
</comment>
<sequence length="456" mass="51064">MSALHLYNSLSRQKEPFHPITPNHVMMYVCGMTVYDFCHIGHARVMVVFDTIARHLRASGYQLTYVRNITDIDDKIIRRAAENNEPIQALTQRFINAMHEDEAALGCLPPSIEPKATEYVAEMIAMIGELIAQNHAYIADNGDVYYSVRSFDEYGKLANRRLEDLRAGERIAINEAKNDPLDFVLWKKAKTGEPSWESPWGAGRPGWHIECSVMSRHQLGDHFDIHGGGMDLKFPHHECEIAQSEPVCGGKHVNYWLHNGFINIDNEKMSKSLGNFFTVRDVLKNYAGEVIRFFMLQSHYRGPVNYSDAALEEAKRGLQRLYTALETAPTTGGAILLPYQERFVAAMDDDFNTPQAIAVLFELAKMLNKAAAAEAADIAFTLRTLAARLGLLTGDAKTLFQQKGALSAAEIEAEIARRQAAKAAKDYATADSIREKLSALGIELKDSATGTQWYYR</sequence>
<protein>
    <recommendedName>
        <fullName evidence="1">Cysteine--tRNA ligase</fullName>
        <ecNumber evidence="1">6.1.1.16</ecNumber>
    </recommendedName>
    <alternativeName>
        <fullName evidence="1">Cysteinyl-tRNA synthetase</fullName>
        <shortName evidence="1">CysRS</shortName>
    </alternativeName>
</protein>
<feature type="chain" id="PRO_1000006584" description="Cysteine--tRNA ligase">
    <location>
        <begin position="1"/>
        <end position="456"/>
    </location>
</feature>
<feature type="short sequence motif" description="'HIGH' region">
    <location>
        <begin position="32"/>
        <end position="42"/>
    </location>
</feature>
<feature type="short sequence motif" description="'KMSKS' region">
    <location>
        <begin position="268"/>
        <end position="272"/>
    </location>
</feature>
<feature type="binding site" evidence="1">
    <location>
        <position position="30"/>
    </location>
    <ligand>
        <name>Zn(2+)</name>
        <dbReference type="ChEBI" id="CHEBI:29105"/>
    </ligand>
</feature>
<feature type="binding site" evidence="1">
    <location>
        <position position="211"/>
    </location>
    <ligand>
        <name>Zn(2+)</name>
        <dbReference type="ChEBI" id="CHEBI:29105"/>
    </ligand>
</feature>
<feature type="binding site" evidence="1">
    <location>
        <position position="236"/>
    </location>
    <ligand>
        <name>Zn(2+)</name>
        <dbReference type="ChEBI" id="CHEBI:29105"/>
    </ligand>
</feature>
<feature type="binding site" evidence="1">
    <location>
        <position position="240"/>
    </location>
    <ligand>
        <name>Zn(2+)</name>
        <dbReference type="ChEBI" id="CHEBI:29105"/>
    </ligand>
</feature>
<feature type="binding site" evidence="1">
    <location>
        <position position="271"/>
    </location>
    <ligand>
        <name>ATP</name>
        <dbReference type="ChEBI" id="CHEBI:30616"/>
    </ligand>
</feature>
<gene>
    <name evidence="1" type="primary">cysS</name>
    <name type="ordered locus">DNO_0208</name>
</gene>